<gene>
    <name type="primary">Amy35</name>
    <name type="synonym">Amy1</name>
    <name type="ORF">GF18844</name>
</gene>
<dbReference type="EC" id="3.2.1.1" evidence="2"/>
<dbReference type="EMBL" id="U53698">
    <property type="protein sequence ID" value="AAC79123.1"/>
    <property type="molecule type" value="Genomic_DNA"/>
</dbReference>
<dbReference type="EMBL" id="CH902617">
    <property type="protein sequence ID" value="EDV44151.1"/>
    <property type="molecule type" value="Genomic_DNA"/>
</dbReference>
<dbReference type="EMBL" id="AF238900">
    <property type="protein sequence ID" value="AAG45254.1"/>
    <property type="molecule type" value="Genomic_DNA"/>
</dbReference>
<dbReference type="EMBL" id="AF238901">
    <property type="protein sequence ID" value="AAG45255.1"/>
    <property type="molecule type" value="Genomic_DNA"/>
</dbReference>
<dbReference type="EMBL" id="AF238902">
    <property type="protein sequence ID" value="AAG45256.1"/>
    <property type="molecule type" value="Genomic_DNA"/>
</dbReference>
<dbReference type="EMBL" id="AF238903">
    <property type="protein sequence ID" value="AAG45257.1"/>
    <property type="molecule type" value="Genomic_DNA"/>
</dbReference>
<dbReference type="EMBL" id="AF238904">
    <property type="protein sequence ID" value="AAG45258.1"/>
    <property type="molecule type" value="Genomic_DNA"/>
</dbReference>
<dbReference type="EMBL" id="AF238905">
    <property type="protein sequence ID" value="AAG45259.1"/>
    <property type="molecule type" value="Genomic_DNA"/>
</dbReference>
<dbReference type="EMBL" id="AF238906">
    <property type="protein sequence ID" value="AAG45260.1"/>
    <property type="molecule type" value="Genomic_DNA"/>
</dbReference>
<dbReference type="EMBL" id="AF238907">
    <property type="protein sequence ID" value="AAG45261.1"/>
    <property type="molecule type" value="Genomic_DNA"/>
</dbReference>
<dbReference type="EMBL" id="AF238908">
    <property type="protein sequence ID" value="AAG45262.1"/>
    <property type="molecule type" value="Genomic_DNA"/>
</dbReference>
<dbReference type="EMBL" id="AF238909">
    <property type="protein sequence ID" value="AAG45263.1"/>
    <property type="molecule type" value="Genomic_DNA"/>
</dbReference>
<dbReference type="EMBL" id="AF238910">
    <property type="protein sequence ID" value="AAG45264.1"/>
    <property type="molecule type" value="Genomic_DNA"/>
</dbReference>
<dbReference type="EMBL" id="AF238911">
    <property type="protein sequence ID" value="AAG45265.1"/>
    <property type="molecule type" value="Genomic_DNA"/>
</dbReference>
<dbReference type="EMBL" id="AF238912">
    <property type="protein sequence ID" value="AAG45266.1"/>
    <property type="molecule type" value="Genomic_DNA"/>
</dbReference>
<dbReference type="EMBL" id="AF238913">
    <property type="protein sequence ID" value="AAG45267.1"/>
    <property type="molecule type" value="Genomic_DNA"/>
</dbReference>
<dbReference type="EMBL" id="AF238914">
    <property type="protein sequence ID" value="AAG45268.1"/>
    <property type="molecule type" value="Genomic_DNA"/>
</dbReference>
<dbReference type="EMBL" id="AF238915">
    <property type="protein sequence ID" value="AAG45269.1"/>
    <property type="molecule type" value="Genomic_DNA"/>
</dbReference>
<dbReference type="EMBL" id="AF238916">
    <property type="protein sequence ID" value="AAG45270.1"/>
    <property type="molecule type" value="Genomic_DNA"/>
</dbReference>
<dbReference type="EMBL" id="AF238917">
    <property type="protein sequence ID" value="AAG45271.1"/>
    <property type="molecule type" value="Genomic_DNA"/>
</dbReference>
<dbReference type="EMBL" id="AF238918">
    <property type="protein sequence ID" value="AAG45272.1"/>
    <property type="molecule type" value="Genomic_DNA"/>
</dbReference>
<dbReference type="EMBL" id="AF238919">
    <property type="protein sequence ID" value="AAG45273.1"/>
    <property type="molecule type" value="Genomic_DNA"/>
</dbReference>
<dbReference type="EMBL" id="AF238920">
    <property type="protein sequence ID" value="AAG45274.1"/>
    <property type="molecule type" value="Genomic_DNA"/>
</dbReference>
<dbReference type="EMBL" id="AF238921">
    <property type="protein sequence ID" value="AAG45275.1"/>
    <property type="molecule type" value="Genomic_DNA"/>
</dbReference>
<dbReference type="EMBL" id="AF238922">
    <property type="protein sequence ID" value="AAG45276.1"/>
    <property type="molecule type" value="Genomic_DNA"/>
</dbReference>
<dbReference type="EMBL" id="AF238923">
    <property type="protein sequence ID" value="AAG45277.1"/>
    <property type="molecule type" value="Genomic_DNA"/>
</dbReference>
<dbReference type="EMBL" id="AF238924">
    <property type="protein sequence ID" value="AAG45278.1"/>
    <property type="molecule type" value="Genomic_DNA"/>
</dbReference>
<dbReference type="EMBL" id="AF238925">
    <property type="protein sequence ID" value="AAG45279.1"/>
    <property type="molecule type" value="Genomic_DNA"/>
</dbReference>
<dbReference type="EMBL" id="AF238926">
    <property type="protein sequence ID" value="AAG45280.1"/>
    <property type="molecule type" value="Genomic_DNA"/>
</dbReference>
<dbReference type="EMBL" id="AF238927">
    <property type="protein sequence ID" value="AAG45281.1"/>
    <property type="molecule type" value="Genomic_DNA"/>
</dbReference>
<dbReference type="EMBL" id="AF238928">
    <property type="protein sequence ID" value="AAG45282.1"/>
    <property type="molecule type" value="Genomic_DNA"/>
</dbReference>
<dbReference type="EMBL" id="AF238929">
    <property type="protein sequence ID" value="AAG45283.1"/>
    <property type="molecule type" value="Genomic_DNA"/>
</dbReference>
<dbReference type="EMBL" id="AF238930">
    <property type="protein sequence ID" value="AAG45284.1"/>
    <property type="molecule type" value="Genomic_DNA"/>
</dbReference>
<dbReference type="EMBL" id="AF238931">
    <property type="protein sequence ID" value="AAG45285.1"/>
    <property type="molecule type" value="Genomic_DNA"/>
</dbReference>
<dbReference type="EMBL" id="AF238932">
    <property type="protein sequence ID" value="AAG45286.1"/>
    <property type="molecule type" value="Genomic_DNA"/>
</dbReference>
<dbReference type="EMBL" id="AF238933">
    <property type="protein sequence ID" value="AAG45287.1"/>
    <property type="molecule type" value="Genomic_DNA"/>
</dbReference>
<dbReference type="EMBL" id="AF238934">
    <property type="protein sequence ID" value="AAG45288.1"/>
    <property type="molecule type" value="Genomic_DNA"/>
</dbReference>
<dbReference type="EMBL" id="AF238935">
    <property type="protein sequence ID" value="AAG45289.1"/>
    <property type="molecule type" value="Genomic_DNA"/>
</dbReference>
<dbReference type="EMBL" id="AF238936">
    <property type="protein sequence ID" value="AAG45290.1"/>
    <property type="molecule type" value="Genomic_DNA"/>
</dbReference>
<dbReference type="EMBL" id="AF238937">
    <property type="protein sequence ID" value="AAG45291.1"/>
    <property type="molecule type" value="Genomic_DNA"/>
</dbReference>
<dbReference type="EMBL" id="AF238938">
    <property type="protein sequence ID" value="AAG45292.1"/>
    <property type="molecule type" value="Genomic_DNA"/>
</dbReference>
<dbReference type="EMBL" id="AF238939">
    <property type="protein sequence ID" value="AAG45293.1"/>
    <property type="molecule type" value="Genomic_DNA"/>
</dbReference>
<dbReference type="EMBL" id="AF238940">
    <property type="protein sequence ID" value="AAG45294.1"/>
    <property type="molecule type" value="Genomic_DNA"/>
</dbReference>
<dbReference type="EMBL" id="AF238941">
    <property type="protein sequence ID" value="AAG45295.1"/>
    <property type="molecule type" value="Genomic_DNA"/>
</dbReference>
<dbReference type="EMBL" id="AF238942">
    <property type="protein sequence ID" value="AAG45296.1"/>
    <property type="molecule type" value="Genomic_DNA"/>
</dbReference>
<dbReference type="EMBL" id="AF238943">
    <property type="protein sequence ID" value="AAG45297.1"/>
    <property type="molecule type" value="Genomic_DNA"/>
</dbReference>
<dbReference type="EMBL" id="AF238944">
    <property type="protein sequence ID" value="AAG45298.1"/>
    <property type="molecule type" value="Genomic_DNA"/>
</dbReference>
<dbReference type="EMBL" id="AF238945">
    <property type="protein sequence ID" value="AAG45299.1"/>
    <property type="molecule type" value="Genomic_DNA"/>
</dbReference>
<dbReference type="EMBL" id="AF238946">
    <property type="protein sequence ID" value="AAG45300.1"/>
    <property type="molecule type" value="Genomic_DNA"/>
</dbReference>
<dbReference type="EMBL" id="AF238947">
    <property type="protein sequence ID" value="AAG45301.1"/>
    <property type="molecule type" value="Genomic_DNA"/>
</dbReference>
<dbReference type="EMBL" id="AF238948">
    <property type="protein sequence ID" value="AAG45302.1"/>
    <property type="molecule type" value="Genomic_DNA"/>
</dbReference>
<dbReference type="EMBL" id="AF238949">
    <property type="protein sequence ID" value="AAG45303.1"/>
    <property type="molecule type" value="Genomic_DNA"/>
</dbReference>
<dbReference type="EMBL" id="AF238950">
    <property type="protein sequence ID" value="AAG45304.1"/>
    <property type="molecule type" value="Genomic_DNA"/>
</dbReference>
<dbReference type="EMBL" id="AF238951">
    <property type="protein sequence ID" value="AAG45305.1"/>
    <property type="molecule type" value="Genomic_DNA"/>
</dbReference>
<dbReference type="EMBL" id="AF238952">
    <property type="protein sequence ID" value="AAG45306.1"/>
    <property type="molecule type" value="Genomic_DNA"/>
</dbReference>
<dbReference type="EMBL" id="AF238953">
    <property type="protein sequence ID" value="AAG45307.1"/>
    <property type="molecule type" value="Genomic_DNA"/>
</dbReference>
<dbReference type="EMBL" id="AF238954">
    <property type="protein sequence ID" value="AAG45308.1"/>
    <property type="molecule type" value="Genomic_DNA"/>
</dbReference>
<dbReference type="EMBL" id="AF238955">
    <property type="protein sequence ID" value="AAG45309.1"/>
    <property type="molecule type" value="Genomic_DNA"/>
</dbReference>
<dbReference type="EMBL" id="AF238956">
    <property type="protein sequence ID" value="AAG45310.1"/>
    <property type="molecule type" value="Genomic_DNA"/>
</dbReference>
<dbReference type="EMBL" id="AF238957">
    <property type="protein sequence ID" value="AAG45311.1"/>
    <property type="molecule type" value="Genomic_DNA"/>
</dbReference>
<dbReference type="EMBL" id="U31122">
    <property type="protein sequence ID" value="AAC47353.1"/>
    <property type="molecule type" value="Genomic_DNA"/>
</dbReference>
<dbReference type="SMR" id="Q23835"/>
<dbReference type="FunCoup" id="Q23835">
    <property type="interactions" value="31"/>
</dbReference>
<dbReference type="STRING" id="7217.Q23835"/>
<dbReference type="CAZy" id="GH13">
    <property type="family name" value="Glycoside Hydrolase Family 13"/>
</dbReference>
<dbReference type="EnsemblMetazoa" id="FBtr0123544">
    <property type="protein sequence ID" value="FBpp0122036"/>
    <property type="gene ID" value="FBgn0261677"/>
</dbReference>
<dbReference type="EnsemblMetazoa" id="XM_001955554.4">
    <property type="protein sequence ID" value="XP_001955590.1"/>
    <property type="gene ID" value="LOC6492910"/>
</dbReference>
<dbReference type="GeneID" id="6492910"/>
<dbReference type="KEGG" id="dan:6492910"/>
<dbReference type="eggNOG" id="KOG2212">
    <property type="taxonomic scope" value="Eukaryota"/>
</dbReference>
<dbReference type="HOGENOM" id="CLU_013336_2_1_1"/>
<dbReference type="InParanoid" id="Q23835"/>
<dbReference type="OMA" id="PKEYKMA"/>
<dbReference type="OrthoDB" id="550577at2759"/>
<dbReference type="PhylomeDB" id="Q23835"/>
<dbReference type="Proteomes" id="UP000007801">
    <property type="component" value="Unassembled WGS sequence"/>
</dbReference>
<dbReference type="GO" id="GO:0004556">
    <property type="term" value="F:alpha-amylase activity"/>
    <property type="evidence" value="ECO:0007669"/>
    <property type="project" value="UniProtKB-EC"/>
</dbReference>
<dbReference type="GO" id="GO:0046872">
    <property type="term" value="F:metal ion binding"/>
    <property type="evidence" value="ECO:0007669"/>
    <property type="project" value="UniProtKB-KW"/>
</dbReference>
<dbReference type="GO" id="GO:0005975">
    <property type="term" value="P:carbohydrate metabolic process"/>
    <property type="evidence" value="ECO:0007669"/>
    <property type="project" value="InterPro"/>
</dbReference>
<dbReference type="CDD" id="cd11317">
    <property type="entry name" value="AmyAc_bac_euk_AmyA"/>
    <property type="match status" value="1"/>
</dbReference>
<dbReference type="FunFam" id="2.60.40.1180:FF:000020">
    <property type="entry name" value="Pancreatic alpha-amylase"/>
    <property type="match status" value="1"/>
</dbReference>
<dbReference type="FunFam" id="3.20.20.80:FF:000056">
    <property type="entry name" value="Pancreatic alpha-amylase"/>
    <property type="match status" value="1"/>
</dbReference>
<dbReference type="Gene3D" id="3.20.20.80">
    <property type="entry name" value="Glycosidases"/>
    <property type="match status" value="1"/>
</dbReference>
<dbReference type="Gene3D" id="2.60.40.1180">
    <property type="entry name" value="Golgi alpha-mannosidase II"/>
    <property type="match status" value="1"/>
</dbReference>
<dbReference type="InterPro" id="IPR006048">
    <property type="entry name" value="A-amylase/branching_C"/>
</dbReference>
<dbReference type="InterPro" id="IPR031319">
    <property type="entry name" value="A-amylase_C"/>
</dbReference>
<dbReference type="InterPro" id="IPR006046">
    <property type="entry name" value="Alpha_amylase"/>
</dbReference>
<dbReference type="InterPro" id="IPR006047">
    <property type="entry name" value="Glyco_hydro_13_cat_dom"/>
</dbReference>
<dbReference type="InterPro" id="IPR013780">
    <property type="entry name" value="Glyco_hydro_b"/>
</dbReference>
<dbReference type="InterPro" id="IPR017853">
    <property type="entry name" value="Glycoside_hydrolase_SF"/>
</dbReference>
<dbReference type="PANTHER" id="PTHR43447">
    <property type="entry name" value="ALPHA-AMYLASE"/>
    <property type="match status" value="1"/>
</dbReference>
<dbReference type="Pfam" id="PF00128">
    <property type="entry name" value="Alpha-amylase"/>
    <property type="match status" value="1"/>
</dbReference>
<dbReference type="Pfam" id="PF02806">
    <property type="entry name" value="Alpha-amylase_C"/>
    <property type="match status" value="1"/>
</dbReference>
<dbReference type="PRINTS" id="PR00110">
    <property type="entry name" value="ALPHAAMYLASE"/>
</dbReference>
<dbReference type="SMART" id="SM00642">
    <property type="entry name" value="Aamy"/>
    <property type="match status" value="1"/>
</dbReference>
<dbReference type="SMART" id="SM00632">
    <property type="entry name" value="Aamy_C"/>
    <property type="match status" value="1"/>
</dbReference>
<dbReference type="SUPFAM" id="SSF51445">
    <property type="entry name" value="(Trans)glycosidases"/>
    <property type="match status" value="1"/>
</dbReference>
<dbReference type="SUPFAM" id="SSF51011">
    <property type="entry name" value="Glycosyl hydrolase domain"/>
    <property type="match status" value="1"/>
</dbReference>
<proteinExistence type="inferred from homology"/>
<organism>
    <name type="scientific">Drosophila ananassae</name>
    <name type="common">Fruit fly</name>
    <dbReference type="NCBI Taxonomy" id="7217"/>
    <lineage>
        <taxon>Eukaryota</taxon>
        <taxon>Metazoa</taxon>
        <taxon>Ecdysozoa</taxon>
        <taxon>Arthropoda</taxon>
        <taxon>Hexapoda</taxon>
        <taxon>Insecta</taxon>
        <taxon>Pterygota</taxon>
        <taxon>Neoptera</taxon>
        <taxon>Endopterygota</taxon>
        <taxon>Diptera</taxon>
        <taxon>Brachycera</taxon>
        <taxon>Muscomorpha</taxon>
        <taxon>Ephydroidea</taxon>
        <taxon>Drosophilidae</taxon>
        <taxon>Drosophila</taxon>
        <taxon>Sophophora</taxon>
    </lineage>
</organism>
<keyword id="KW-0106">Calcium</keyword>
<keyword id="KW-0119">Carbohydrate metabolism</keyword>
<keyword id="KW-0868">Chloride</keyword>
<keyword id="KW-1015">Disulfide bond</keyword>
<keyword id="KW-0326">Glycosidase</keyword>
<keyword id="KW-0378">Hydrolase</keyword>
<keyword id="KW-0479">Metal-binding</keyword>
<keyword id="KW-1185">Reference proteome</keyword>
<keyword id="KW-0732">Signal</keyword>
<feature type="signal peptide" evidence="3">
    <location>
        <begin position="1"/>
        <end position="18"/>
    </location>
</feature>
<feature type="chain" id="PRO_0000001360" description="Alpha-amylase 1">
    <location>
        <begin position="19"/>
        <end position="494"/>
    </location>
</feature>
<feature type="region of interest" description="Disordered" evidence="4">
    <location>
        <begin position="350"/>
        <end position="370"/>
    </location>
</feature>
<feature type="compositionally biased region" description="Low complexity" evidence="4">
    <location>
        <begin position="351"/>
        <end position="363"/>
    </location>
</feature>
<feature type="active site" description="Nucleophile" evidence="2">
    <location>
        <position position="204"/>
    </location>
</feature>
<feature type="active site" description="Proton donor" evidence="2">
    <location>
        <position position="241"/>
    </location>
</feature>
<feature type="binding site" evidence="2">
    <location>
        <position position="116"/>
    </location>
    <ligand>
        <name>Ca(2+)</name>
        <dbReference type="ChEBI" id="CHEBI:29108"/>
    </ligand>
</feature>
<feature type="binding site" evidence="2">
    <location>
        <position position="165"/>
    </location>
    <ligand>
        <name>Ca(2+)</name>
        <dbReference type="ChEBI" id="CHEBI:29108"/>
    </ligand>
</feature>
<feature type="binding site" evidence="2">
    <location>
        <position position="174"/>
    </location>
    <ligand>
        <name>Ca(2+)</name>
        <dbReference type="ChEBI" id="CHEBI:29108"/>
    </ligand>
</feature>
<feature type="binding site" evidence="2">
    <location>
        <position position="202"/>
    </location>
    <ligand>
        <name>chloride</name>
        <dbReference type="ChEBI" id="CHEBI:17996"/>
    </ligand>
</feature>
<feature type="binding site" evidence="2">
    <location>
        <position position="208"/>
    </location>
    <ligand>
        <name>Ca(2+)</name>
        <dbReference type="ChEBI" id="CHEBI:29108"/>
    </ligand>
</feature>
<feature type="binding site" evidence="2">
    <location>
        <position position="304"/>
    </location>
    <ligand>
        <name>chloride</name>
        <dbReference type="ChEBI" id="CHEBI:17996"/>
    </ligand>
</feature>
<feature type="binding site" evidence="2">
    <location>
        <position position="343"/>
    </location>
    <ligand>
        <name>chloride</name>
        <dbReference type="ChEBI" id="CHEBI:17996"/>
    </ligand>
</feature>
<feature type="site" description="Transition state stabilizer" evidence="2">
    <location>
        <position position="306"/>
    </location>
</feature>
<feature type="disulfide bond" evidence="2">
    <location>
        <begin position="46"/>
        <end position="102"/>
    </location>
</feature>
<feature type="disulfide bond" evidence="2">
    <location>
        <begin position="153"/>
        <end position="167"/>
    </location>
</feature>
<feature type="disulfide bond" evidence="2">
    <location>
        <begin position="376"/>
        <end position="382"/>
    </location>
</feature>
<feature type="disulfide bond" evidence="2">
    <location>
        <begin position="448"/>
        <end position="460"/>
    </location>
</feature>
<feature type="sequence variant" description="In strain: Taka5." evidence="5">
    <original>F</original>
    <variation>L</variation>
    <location>
        <position position="2"/>
    </location>
</feature>
<feature type="sequence conflict" description="In Ref. 1; AAC79123 and 4; AAC47353." evidence="6" ref="1 4">
    <original>N</original>
    <variation>D</variation>
    <location>
        <position position="121"/>
    </location>
</feature>
<feature type="sequence conflict" description="In Ref. 1; AAC79123 and 4; AAC47353." evidence="6" ref="1 4">
    <original>G</original>
    <variation>A</variation>
    <location>
        <position position="128"/>
    </location>
</feature>
<feature type="sequence conflict" description="In Ref. 1; AAC79123." evidence="6" ref="1">
    <original>K</original>
    <variation>R</variation>
    <location>
        <position position="387"/>
    </location>
</feature>
<feature type="sequence conflict" description="In Ref. 1; AAC79123." evidence="6" ref="1">
    <original>G</original>
    <variation>D</variation>
    <location>
        <position position="394"/>
    </location>
</feature>
<protein>
    <recommendedName>
        <fullName>Alpha-amylase 1</fullName>
        <ecNumber evidence="2">3.2.1.1</ecNumber>
    </recommendedName>
</protein>
<evidence type="ECO:0000250" key="1"/>
<evidence type="ECO:0000250" key="2">
    <source>
        <dbReference type="UniProtKB" id="P04746"/>
    </source>
</evidence>
<evidence type="ECO:0000255" key="3"/>
<evidence type="ECO:0000256" key="4">
    <source>
        <dbReference type="SAM" id="MobiDB-lite"/>
    </source>
</evidence>
<evidence type="ECO:0000269" key="5">
    <source>
    </source>
</evidence>
<evidence type="ECO:0000305" key="6"/>
<name>AMY1_DROAN</name>
<sequence length="494" mass="53575">MFLAKSIVCLALLAVANAQFNTNYASGRSGMVHLFEWKWDDIAAECENFLGPYGYAGVQVSPVNENAVKDSRPWWERYQPISYKLVTRSGNEEQFASMVRRCNNVGVRIYVDVVFNHMAANGGTYGTGGSTASPSSKSYPGVPFSSLDFNPTCAISNYNDANQVRNCELVGLRDLNQGNSYVQEKIVEFLNHLIDLGVAGFRVDAAKHMWPADLGVIYGSLKNLNTDHGFESGAKAYIVQEVIDMGGEAISKSEYTGLGAITEFRHSDSIGKAFRGKNQLQYLVNWGVSWGFAASDRSLVFVDNHDNQRGHGAGGADVLTYKVPKQYKMASAFMLAHPFGTPRVMSSFSFTDTDQGPPTTDGQNIASPSFNSDNSCSGGWVCEHRWKQIYNMVGFRNAVGSDAIQNWWDNGSNQIAFSRGSKGFVAFNNDNYDLNSSVQTGLPAGTYCDVISGSKSGSSCTGKTVTVGSDGRANISIGSSEDDGVLAIHVNAKL</sequence>
<reference key="1">
    <citation type="journal article" date="2003" name="J. Mol. Evol.">
        <title>A nested alpha-amylase gene in Drosophila ananassae.</title>
        <authorList>
            <person name="Da Lage J.-L."/>
            <person name="Maisonhaute C."/>
            <person name="Maczkowiak F."/>
            <person name="Cariou M.L."/>
        </authorList>
    </citation>
    <scope>NUCLEOTIDE SEQUENCE [GENOMIC DNA]</scope>
    <source>
        <strain>Tai 13-1610</strain>
    </source>
</reference>
<reference key="2">
    <citation type="journal article" date="2007" name="Nature">
        <title>Evolution of genes and genomes on the Drosophila phylogeny.</title>
        <authorList>
            <consortium name="Drosophila 12 genomes consortium"/>
        </authorList>
    </citation>
    <scope>NUCLEOTIDE SEQUENCE [LARGE SCALE GENOMIC DNA]</scope>
    <source>
        <strain>Tucson 14024-0371.13</strain>
    </source>
</reference>
<reference key="3">
    <citation type="journal article" date="2000" name="J. Mol. Evol.">
        <title>Molecular characterization and evolution of the amylase multigene family of Drosophila ananassae.</title>
        <authorList>
            <person name="Da Lage J.-L."/>
            <person name="Maczkowiak F."/>
            <person name="Cariou M.-L."/>
        </authorList>
    </citation>
    <scope>NUCLEOTIDE SEQUENCE [GENOMIC DNA] OF 1-34</scope>
    <scope>VARIANT LEU-2</scope>
    <source>
        <strain>371-1</strain>
        <strain>Bangalore</strain>
        <strain>Beruwala</strain>
        <strain>Bouake</strain>
        <strain>Brazzaville</strain>
        <strain>Colombo</strain>
        <strain>Cuba</strain>
        <strain>Djeffa</strain>
        <strain>Guadeloupe</strain>
        <strain>Korat</strain>
        <strain>Korat3422</strain>
        <strain>Lambir</strain>
        <strain>Mauritius</strain>
        <strain>Mexico</strain>
        <strain>Porto Rico</strain>
        <strain>Reunion</strain>
        <strain>Sao Paulo</strain>
        <strain>Tai 13-1610</strain>
        <strain>Taka5</strain>
        <strain>Yaounde</strain>
    </source>
</reference>
<reference key="4">
    <citation type="journal article" date="1996" name="J. Mol. Evol.">
        <title>Distribution and evolution of introns in Drosophila amylase genes.</title>
        <authorList>
            <person name="Da Lage J.-L."/>
            <person name="Wegnez M."/>
            <person name="Cariou M.-L."/>
        </authorList>
    </citation>
    <scope>NUCLEOTIDE SEQUENCE [GENOMIC DNA] OF 57-206</scope>
    <source>
        <strain>Tai 13-1610</strain>
    </source>
</reference>
<accession>Q23835</accession>
<accession>B3LZH2</accession>
<accession>Q9GN69</accession>
<accession>Q9GN73</accession>
<comment type="catalytic activity">
    <reaction evidence="2">
        <text>Endohydrolysis of (1-&gt;4)-alpha-D-glucosidic linkages in polysaccharides containing three or more (1-&gt;4)-alpha-linked D-glucose units.</text>
        <dbReference type="EC" id="3.2.1.1"/>
    </reaction>
</comment>
<comment type="cofactor">
    <cofactor evidence="2">
        <name>Ca(2+)</name>
        <dbReference type="ChEBI" id="CHEBI:29108"/>
    </cofactor>
    <text evidence="2">Binds 1 Ca(2+) ion per subunit.</text>
</comment>
<comment type="cofactor">
    <cofactor evidence="2">
        <name>chloride</name>
        <dbReference type="ChEBI" id="CHEBI:17996"/>
    </cofactor>
    <text evidence="2">Binds 1 Cl(-) ion per subunit.</text>
</comment>
<comment type="subunit">
    <text evidence="1">Monomer.</text>
</comment>
<comment type="similarity">
    <text evidence="6">Belongs to the glycosyl hydrolase 13 family.</text>
</comment>